<keyword id="KW-0131">Cell cycle</keyword>
<keyword id="KW-0132">Cell division</keyword>
<keyword id="KW-0133">Cell shape</keyword>
<keyword id="KW-0961">Cell wall biogenesis/degradation</keyword>
<keyword id="KW-0963">Cytoplasm</keyword>
<keyword id="KW-0573">Peptidoglycan synthesis</keyword>
<keyword id="KW-0670">Pyruvate</keyword>
<keyword id="KW-0808">Transferase</keyword>
<feature type="chain" id="PRO_0000178852" description="UDP-N-acetylglucosamine 1-carboxyvinyltransferase">
    <location>
        <begin position="1"/>
        <end position="429"/>
    </location>
</feature>
<feature type="active site" description="Proton donor" evidence="1">
    <location>
        <position position="126"/>
    </location>
</feature>
<feature type="binding site" evidence="1">
    <location>
        <begin position="22"/>
        <end position="23"/>
    </location>
    <ligand>
        <name>phosphoenolpyruvate</name>
        <dbReference type="ChEBI" id="CHEBI:58702"/>
    </ligand>
</feature>
<feature type="binding site" evidence="1">
    <location>
        <position position="102"/>
    </location>
    <ligand>
        <name>UDP-N-acetyl-alpha-D-glucosamine</name>
        <dbReference type="ChEBI" id="CHEBI:57705"/>
    </ligand>
</feature>
<feature type="binding site" evidence="1">
    <location>
        <begin position="131"/>
        <end position="135"/>
    </location>
    <ligand>
        <name>UDP-N-acetyl-alpha-D-glucosamine</name>
        <dbReference type="ChEBI" id="CHEBI:57705"/>
    </ligand>
</feature>
<feature type="binding site" evidence="1">
    <location>
        <begin position="171"/>
        <end position="174"/>
    </location>
    <ligand>
        <name>UDP-N-acetyl-alpha-D-glucosamine</name>
        <dbReference type="ChEBI" id="CHEBI:57705"/>
    </ligand>
</feature>
<feature type="binding site" evidence="1">
    <location>
        <position position="316"/>
    </location>
    <ligand>
        <name>UDP-N-acetyl-alpha-D-glucosamine</name>
        <dbReference type="ChEBI" id="CHEBI:57705"/>
    </ligand>
</feature>
<feature type="binding site" evidence="1">
    <location>
        <position position="338"/>
    </location>
    <ligand>
        <name>UDP-N-acetyl-alpha-D-glucosamine</name>
        <dbReference type="ChEBI" id="CHEBI:57705"/>
    </ligand>
</feature>
<feature type="modified residue" description="2-(S-cysteinyl)pyruvic acid O-phosphothioketal" evidence="1">
    <location>
        <position position="126"/>
    </location>
</feature>
<protein>
    <recommendedName>
        <fullName evidence="1">UDP-N-acetylglucosamine 1-carboxyvinyltransferase</fullName>
        <ecNumber evidence="1">2.5.1.7</ecNumber>
    </recommendedName>
    <alternativeName>
        <fullName evidence="1">Enoylpyruvate transferase</fullName>
    </alternativeName>
    <alternativeName>
        <fullName evidence="1">UDP-N-acetylglucosamine enolpyruvyl transferase</fullName>
        <shortName evidence="1">EPT</shortName>
    </alternativeName>
</protein>
<name>MURA_BRUSU</name>
<proteinExistence type="inferred from homology"/>
<evidence type="ECO:0000255" key="1">
    <source>
        <dbReference type="HAMAP-Rule" id="MF_00111"/>
    </source>
</evidence>
<organism>
    <name type="scientific">Brucella suis biovar 1 (strain 1330)</name>
    <dbReference type="NCBI Taxonomy" id="204722"/>
    <lineage>
        <taxon>Bacteria</taxon>
        <taxon>Pseudomonadati</taxon>
        <taxon>Pseudomonadota</taxon>
        <taxon>Alphaproteobacteria</taxon>
        <taxon>Hyphomicrobiales</taxon>
        <taxon>Brucellaceae</taxon>
        <taxon>Brucella/Ochrobactrum group</taxon>
        <taxon>Brucella</taxon>
    </lineage>
</organism>
<gene>
    <name evidence="1" type="primary">murA</name>
    <name type="ordered locus">BR0254</name>
    <name type="ordered locus">BS1330_I0255</name>
</gene>
<reference key="1">
    <citation type="journal article" date="2002" name="Proc. Natl. Acad. Sci. U.S.A.">
        <title>The Brucella suis genome reveals fundamental similarities between animal and plant pathogens and symbionts.</title>
        <authorList>
            <person name="Paulsen I.T."/>
            <person name="Seshadri R."/>
            <person name="Nelson K.E."/>
            <person name="Eisen J.A."/>
            <person name="Heidelberg J.F."/>
            <person name="Read T.D."/>
            <person name="Dodson R.J."/>
            <person name="Umayam L.A."/>
            <person name="Brinkac L.M."/>
            <person name="Beanan M.J."/>
            <person name="Daugherty S.C."/>
            <person name="DeBoy R.T."/>
            <person name="Durkin A.S."/>
            <person name="Kolonay J.F."/>
            <person name="Madupu R."/>
            <person name="Nelson W.C."/>
            <person name="Ayodeji B."/>
            <person name="Kraul M."/>
            <person name="Shetty J."/>
            <person name="Malek J.A."/>
            <person name="Van Aken S.E."/>
            <person name="Riedmuller S."/>
            <person name="Tettelin H."/>
            <person name="Gill S.R."/>
            <person name="White O."/>
            <person name="Salzberg S.L."/>
            <person name="Hoover D.L."/>
            <person name="Lindler L.E."/>
            <person name="Halling S.M."/>
            <person name="Boyle S.M."/>
            <person name="Fraser C.M."/>
        </authorList>
    </citation>
    <scope>NUCLEOTIDE SEQUENCE [LARGE SCALE GENOMIC DNA]</scope>
    <source>
        <strain>1330</strain>
    </source>
</reference>
<reference key="2">
    <citation type="journal article" date="2011" name="J. Bacteriol.">
        <title>Revised genome sequence of Brucella suis 1330.</title>
        <authorList>
            <person name="Tae H."/>
            <person name="Shallom S."/>
            <person name="Settlage R."/>
            <person name="Preston D."/>
            <person name="Adams L.G."/>
            <person name="Garner H.R."/>
        </authorList>
    </citation>
    <scope>NUCLEOTIDE SEQUENCE [LARGE SCALE GENOMIC DNA]</scope>
    <source>
        <strain>1330</strain>
    </source>
</reference>
<dbReference type="EC" id="2.5.1.7" evidence="1"/>
<dbReference type="EMBL" id="AE014291">
    <property type="protein sequence ID" value="AAN29203.1"/>
    <property type="molecule type" value="Genomic_DNA"/>
</dbReference>
<dbReference type="EMBL" id="CP002997">
    <property type="protein sequence ID" value="AEM17616.1"/>
    <property type="molecule type" value="Genomic_DNA"/>
</dbReference>
<dbReference type="RefSeq" id="WP_002965536.1">
    <property type="nucleotide sequence ID" value="NZ_KN046804.1"/>
</dbReference>
<dbReference type="SMR" id="P65453"/>
<dbReference type="GeneID" id="97534345"/>
<dbReference type="KEGG" id="bms:BR0254"/>
<dbReference type="KEGG" id="bsi:BS1330_I0255"/>
<dbReference type="PATRIC" id="fig|204722.21.peg.1043"/>
<dbReference type="HOGENOM" id="CLU_027387_0_0_5"/>
<dbReference type="UniPathway" id="UPA00219"/>
<dbReference type="Proteomes" id="UP000007104">
    <property type="component" value="Chromosome I"/>
</dbReference>
<dbReference type="GO" id="GO:0005737">
    <property type="term" value="C:cytoplasm"/>
    <property type="evidence" value="ECO:0007669"/>
    <property type="project" value="UniProtKB-SubCell"/>
</dbReference>
<dbReference type="GO" id="GO:0008760">
    <property type="term" value="F:UDP-N-acetylglucosamine 1-carboxyvinyltransferase activity"/>
    <property type="evidence" value="ECO:0007669"/>
    <property type="project" value="UniProtKB-UniRule"/>
</dbReference>
<dbReference type="GO" id="GO:0051301">
    <property type="term" value="P:cell division"/>
    <property type="evidence" value="ECO:0007669"/>
    <property type="project" value="UniProtKB-KW"/>
</dbReference>
<dbReference type="GO" id="GO:0071555">
    <property type="term" value="P:cell wall organization"/>
    <property type="evidence" value="ECO:0007669"/>
    <property type="project" value="UniProtKB-KW"/>
</dbReference>
<dbReference type="GO" id="GO:0009252">
    <property type="term" value="P:peptidoglycan biosynthetic process"/>
    <property type="evidence" value="ECO:0007669"/>
    <property type="project" value="UniProtKB-UniRule"/>
</dbReference>
<dbReference type="GO" id="GO:0008360">
    <property type="term" value="P:regulation of cell shape"/>
    <property type="evidence" value="ECO:0007669"/>
    <property type="project" value="UniProtKB-KW"/>
</dbReference>
<dbReference type="GO" id="GO:0019277">
    <property type="term" value="P:UDP-N-acetylgalactosamine biosynthetic process"/>
    <property type="evidence" value="ECO:0007669"/>
    <property type="project" value="InterPro"/>
</dbReference>
<dbReference type="CDD" id="cd01555">
    <property type="entry name" value="UdpNAET"/>
    <property type="match status" value="1"/>
</dbReference>
<dbReference type="FunFam" id="3.65.10.10:FF:000001">
    <property type="entry name" value="UDP-N-acetylglucosamine 1-carboxyvinyltransferase"/>
    <property type="match status" value="1"/>
</dbReference>
<dbReference type="Gene3D" id="3.65.10.10">
    <property type="entry name" value="Enolpyruvate transferase domain"/>
    <property type="match status" value="2"/>
</dbReference>
<dbReference type="HAMAP" id="MF_00111">
    <property type="entry name" value="MurA"/>
    <property type="match status" value="1"/>
</dbReference>
<dbReference type="InterPro" id="IPR001986">
    <property type="entry name" value="Enolpyruvate_Tfrase_dom"/>
</dbReference>
<dbReference type="InterPro" id="IPR036968">
    <property type="entry name" value="Enolpyruvate_Tfrase_sf"/>
</dbReference>
<dbReference type="InterPro" id="IPR050068">
    <property type="entry name" value="MurA_subfamily"/>
</dbReference>
<dbReference type="InterPro" id="IPR013792">
    <property type="entry name" value="RNA3'P_cycl/enolpyr_Trfase_a/b"/>
</dbReference>
<dbReference type="InterPro" id="IPR005750">
    <property type="entry name" value="UDP_GlcNAc_COvinyl_MurA"/>
</dbReference>
<dbReference type="NCBIfam" id="TIGR01072">
    <property type="entry name" value="murA"/>
    <property type="match status" value="1"/>
</dbReference>
<dbReference type="NCBIfam" id="NF006873">
    <property type="entry name" value="PRK09369.1"/>
    <property type="match status" value="1"/>
</dbReference>
<dbReference type="PANTHER" id="PTHR43783">
    <property type="entry name" value="UDP-N-ACETYLGLUCOSAMINE 1-CARBOXYVINYLTRANSFERASE"/>
    <property type="match status" value="1"/>
</dbReference>
<dbReference type="PANTHER" id="PTHR43783:SF1">
    <property type="entry name" value="UDP-N-ACETYLGLUCOSAMINE 1-CARBOXYVINYLTRANSFERASE"/>
    <property type="match status" value="1"/>
</dbReference>
<dbReference type="Pfam" id="PF00275">
    <property type="entry name" value="EPSP_synthase"/>
    <property type="match status" value="1"/>
</dbReference>
<dbReference type="SUPFAM" id="SSF55205">
    <property type="entry name" value="EPT/RTPC-like"/>
    <property type="match status" value="1"/>
</dbReference>
<comment type="function">
    <text evidence="1">Cell wall formation. Adds enolpyruvyl to UDP-N-acetylglucosamine.</text>
</comment>
<comment type="catalytic activity">
    <reaction evidence="1">
        <text>phosphoenolpyruvate + UDP-N-acetyl-alpha-D-glucosamine = UDP-N-acetyl-3-O-(1-carboxyvinyl)-alpha-D-glucosamine + phosphate</text>
        <dbReference type="Rhea" id="RHEA:18681"/>
        <dbReference type="ChEBI" id="CHEBI:43474"/>
        <dbReference type="ChEBI" id="CHEBI:57705"/>
        <dbReference type="ChEBI" id="CHEBI:58702"/>
        <dbReference type="ChEBI" id="CHEBI:68483"/>
        <dbReference type="EC" id="2.5.1.7"/>
    </reaction>
</comment>
<comment type="pathway">
    <text evidence="1">Cell wall biogenesis; peptidoglycan biosynthesis.</text>
</comment>
<comment type="subcellular location">
    <subcellularLocation>
        <location evidence="1">Cytoplasm</location>
    </subcellularLocation>
</comment>
<comment type="similarity">
    <text evidence="1">Belongs to the EPSP synthase family. MurA subfamily.</text>
</comment>
<accession>P65453</accession>
<accession>G0KBV3</accession>
<accession>Q8YF61</accession>
<sequence length="429" mass="45719">MDRIKIVGGNKLNGVIPISGAKNAALPLMIASLLTDDTLTLENVPHLADVEQLIRILSNHGVDYSVNGRREHQNGPYSRTIHFTARNIVDTTAPYELVSRMRASFWVIGPLLARMGEANVSLPGGCAIGTRPVDLLLDALLALGAEIDIENGYAKAKARNGLVGARYKFPKVSVGATHVMLMAATLAKGETIIENAAREPEVANLADCLNAMGAKISGAGSSTIHVQGVTNLSGARVRIIPDRIEAGTYAMAVAMTGGDVLLEGAQESQLSCVLETLRQAGAEINETNSGLRVVRNGHGIQPVDITTDPFPGFPTDLQAQFMGLMTRAKGTSHITETIFENRFMHVQELARLGAKISLSGQTATVEGVERLKGAQVMATDLRASVSLVIAGLAAEGETIVNRVYHLDRGFERLEEKLSRCGADVKRISG</sequence>